<protein>
    <recommendedName>
        <fullName>Probable cellulose synthase A catalytic subunit 2 [UDP-forming]</fullName>
        <ecNumber evidence="5">2.4.1.12</ecNumber>
    </recommendedName>
    <alternativeName>
        <fullName>OsCesA2</fullName>
    </alternativeName>
</protein>
<proteinExistence type="inferred from homology"/>
<name>CESA2_ORYSI</name>
<gene>
    <name type="primary">CESA2</name>
    <name type="ORF">OsI_013509</name>
</gene>
<evidence type="ECO:0000250" key="1">
    <source>
        <dbReference type="UniProtKB" id="Q941L0"/>
    </source>
</evidence>
<evidence type="ECO:0000250" key="2">
    <source>
        <dbReference type="UniProtKB" id="Q9SWW6"/>
    </source>
</evidence>
<evidence type="ECO:0000255" key="3"/>
<evidence type="ECO:0000256" key="4">
    <source>
        <dbReference type="SAM" id="MobiDB-lite"/>
    </source>
</evidence>
<evidence type="ECO:0000305" key="5"/>
<dbReference type="EC" id="2.4.1.12" evidence="5"/>
<dbReference type="EMBL" id="CM000128">
    <property type="protein sequence ID" value="EAY92276.1"/>
    <property type="molecule type" value="Genomic_DNA"/>
</dbReference>
<dbReference type="SMR" id="A2XN66"/>
<dbReference type="STRING" id="39946.A2XN66"/>
<dbReference type="iPTMnet" id="A2XN66"/>
<dbReference type="EnsemblPlants" id="BGIOSGA009600-TA">
    <property type="protein sequence ID" value="BGIOSGA009600-PA"/>
    <property type="gene ID" value="BGIOSGA009600"/>
</dbReference>
<dbReference type="EnsemblPlants" id="OsIR64_03g0038380.01">
    <property type="protein sequence ID" value="OsIR64_03g0038380.01"/>
    <property type="gene ID" value="OsIR64_03g0038380"/>
</dbReference>
<dbReference type="EnsemblPlants" id="OsLiXu_03g0038590.01">
    <property type="protein sequence ID" value="OsLiXu_03g0038590.01"/>
    <property type="gene ID" value="OsLiXu_03g0038590"/>
</dbReference>
<dbReference type="EnsemblPlants" id="OsMH63_03G038580_01">
    <property type="protein sequence ID" value="OsMH63_03G038580_01"/>
    <property type="gene ID" value="OsMH63_03G038580"/>
</dbReference>
<dbReference type="EnsemblPlants" id="OsPr106_03g0038620.01">
    <property type="protein sequence ID" value="OsPr106_03g0038620.01"/>
    <property type="gene ID" value="OsPr106_03g0038620"/>
</dbReference>
<dbReference type="Gramene" id="BGIOSGA009600-TA">
    <property type="protein sequence ID" value="BGIOSGA009600-PA"/>
    <property type="gene ID" value="BGIOSGA009600"/>
</dbReference>
<dbReference type="Gramene" id="OsIR64_03g0038380.01">
    <property type="protein sequence ID" value="OsIR64_03g0038380.01"/>
    <property type="gene ID" value="OsIR64_03g0038380"/>
</dbReference>
<dbReference type="Gramene" id="OsLiXu_03g0038590.01">
    <property type="protein sequence ID" value="OsLiXu_03g0038590.01"/>
    <property type="gene ID" value="OsLiXu_03g0038590"/>
</dbReference>
<dbReference type="Gramene" id="OsMH63_03G038580_01">
    <property type="protein sequence ID" value="OsMH63_03G038580_01"/>
    <property type="gene ID" value="OsMH63_03G038580"/>
</dbReference>
<dbReference type="Gramene" id="OsPr106_03g0038620.01">
    <property type="protein sequence ID" value="OsPr106_03g0038620.01"/>
    <property type="gene ID" value="OsPr106_03g0038620"/>
</dbReference>
<dbReference type="HOGENOM" id="CLU_001418_0_1_1"/>
<dbReference type="OMA" id="RPCYEFE"/>
<dbReference type="UniPathway" id="UPA00695"/>
<dbReference type="Proteomes" id="UP000007015">
    <property type="component" value="Chromosome 3"/>
</dbReference>
<dbReference type="GO" id="GO:0005886">
    <property type="term" value="C:plasma membrane"/>
    <property type="evidence" value="ECO:0007669"/>
    <property type="project" value="UniProtKB-SubCell"/>
</dbReference>
<dbReference type="GO" id="GO:0016760">
    <property type="term" value="F:cellulose synthase (UDP-forming) activity"/>
    <property type="evidence" value="ECO:0007669"/>
    <property type="project" value="UniProtKB-EC"/>
</dbReference>
<dbReference type="GO" id="GO:0008270">
    <property type="term" value="F:zinc ion binding"/>
    <property type="evidence" value="ECO:0007669"/>
    <property type="project" value="UniProtKB-KW"/>
</dbReference>
<dbReference type="GO" id="GO:0071555">
    <property type="term" value="P:cell wall organization"/>
    <property type="evidence" value="ECO:0007669"/>
    <property type="project" value="UniProtKB-KW"/>
</dbReference>
<dbReference type="GO" id="GO:0030244">
    <property type="term" value="P:cellulose biosynthetic process"/>
    <property type="evidence" value="ECO:0007669"/>
    <property type="project" value="UniProtKB-KW"/>
</dbReference>
<dbReference type="GO" id="GO:0071669">
    <property type="term" value="P:plant-type cell wall organization or biogenesis"/>
    <property type="evidence" value="ECO:0007669"/>
    <property type="project" value="UniProtKB-ARBA"/>
</dbReference>
<dbReference type="CDD" id="cd16617">
    <property type="entry name" value="mRING-HC-C4C4_CesA"/>
    <property type="match status" value="1"/>
</dbReference>
<dbReference type="FunFam" id="3.90.550.10:FF:000009">
    <property type="entry name" value="Cellulose synthase"/>
    <property type="match status" value="1"/>
</dbReference>
<dbReference type="Gene3D" id="3.90.550.10">
    <property type="entry name" value="Spore Coat Polysaccharide Biosynthesis Protein SpsA, Chain A"/>
    <property type="match status" value="1"/>
</dbReference>
<dbReference type="Gene3D" id="3.30.40.10">
    <property type="entry name" value="Zinc/RING finger domain, C3HC4 (zinc finger)"/>
    <property type="match status" value="1"/>
</dbReference>
<dbReference type="InterPro" id="IPR005150">
    <property type="entry name" value="Cellulose_synth"/>
</dbReference>
<dbReference type="InterPro" id="IPR027934">
    <property type="entry name" value="CES_Znf_RING"/>
</dbReference>
<dbReference type="InterPro" id="IPR029044">
    <property type="entry name" value="Nucleotide-diphossugar_trans"/>
</dbReference>
<dbReference type="InterPro" id="IPR013083">
    <property type="entry name" value="Znf_RING/FYVE/PHD"/>
</dbReference>
<dbReference type="PANTHER" id="PTHR13301">
    <property type="entry name" value="X-BOX TRANSCRIPTION FACTOR-RELATED"/>
    <property type="match status" value="1"/>
</dbReference>
<dbReference type="Pfam" id="PF03552">
    <property type="entry name" value="Cellulose_synt"/>
    <property type="match status" value="1"/>
</dbReference>
<dbReference type="Pfam" id="PF14569">
    <property type="entry name" value="zf-UDP"/>
    <property type="match status" value="1"/>
</dbReference>
<dbReference type="SUPFAM" id="SSF53448">
    <property type="entry name" value="Nucleotide-diphospho-sugar transferases"/>
    <property type="match status" value="1"/>
</dbReference>
<dbReference type="SUPFAM" id="SSF57850">
    <property type="entry name" value="RING/U-box"/>
    <property type="match status" value="1"/>
</dbReference>
<organism>
    <name type="scientific">Oryza sativa subsp. indica</name>
    <name type="common">Rice</name>
    <dbReference type="NCBI Taxonomy" id="39946"/>
    <lineage>
        <taxon>Eukaryota</taxon>
        <taxon>Viridiplantae</taxon>
        <taxon>Streptophyta</taxon>
        <taxon>Embryophyta</taxon>
        <taxon>Tracheophyta</taxon>
        <taxon>Spermatophyta</taxon>
        <taxon>Magnoliopsida</taxon>
        <taxon>Liliopsida</taxon>
        <taxon>Poales</taxon>
        <taxon>Poaceae</taxon>
        <taxon>BOP clade</taxon>
        <taxon>Oryzoideae</taxon>
        <taxon>Oryzeae</taxon>
        <taxon>Oryzinae</taxon>
        <taxon>Oryza</taxon>
        <taxon>Oryza sativa</taxon>
    </lineage>
</organism>
<keyword id="KW-1003">Cell membrane</keyword>
<keyword id="KW-0961">Cell wall biogenesis/degradation</keyword>
<keyword id="KW-0135">Cellulose biosynthesis</keyword>
<keyword id="KW-0175">Coiled coil</keyword>
<keyword id="KW-0328">Glycosyltransferase</keyword>
<keyword id="KW-0464">Manganese</keyword>
<keyword id="KW-0472">Membrane</keyword>
<keyword id="KW-0479">Metal-binding</keyword>
<keyword id="KW-1185">Reference proteome</keyword>
<keyword id="KW-0808">Transferase</keyword>
<keyword id="KW-0812">Transmembrane</keyword>
<keyword id="KW-1133">Transmembrane helix</keyword>
<keyword id="KW-0862">Zinc</keyword>
<keyword id="KW-0863">Zinc-finger</keyword>
<feature type="chain" id="PRO_0000319359" description="Probable cellulose synthase A catalytic subunit 2 [UDP-forming]">
    <location>
        <begin position="1"/>
        <end position="1073"/>
    </location>
</feature>
<feature type="topological domain" description="Cytoplasmic" evidence="3">
    <location>
        <begin position="1"/>
        <end position="270"/>
    </location>
</feature>
<feature type="transmembrane region" description="Helical" evidence="3">
    <location>
        <begin position="271"/>
        <end position="291"/>
    </location>
</feature>
<feature type="topological domain" description="Extracellular" evidence="3">
    <location>
        <begin position="292"/>
        <end position="293"/>
    </location>
</feature>
<feature type="transmembrane region" description="Helical" evidence="3">
    <location>
        <begin position="294"/>
        <end position="314"/>
    </location>
</feature>
<feature type="topological domain" description="Cytoplasmic" evidence="3">
    <location>
        <begin position="315"/>
        <end position="856"/>
    </location>
</feature>
<feature type="transmembrane region" description="Helical" evidence="3">
    <location>
        <begin position="857"/>
        <end position="877"/>
    </location>
</feature>
<feature type="topological domain" description="Extracellular" evidence="3">
    <location>
        <begin position="878"/>
        <end position="882"/>
    </location>
</feature>
<feature type="transmembrane region" description="Helical" evidence="3">
    <location>
        <begin position="883"/>
        <end position="903"/>
    </location>
</feature>
<feature type="topological domain" description="Cytoplasmic" evidence="3">
    <location>
        <begin position="904"/>
        <end position="918"/>
    </location>
</feature>
<feature type="transmembrane region" description="Helical" evidence="3">
    <location>
        <begin position="919"/>
        <end position="939"/>
    </location>
</feature>
<feature type="topological domain" description="Extracellular" evidence="3">
    <location>
        <begin position="940"/>
        <end position="969"/>
    </location>
</feature>
<feature type="transmembrane region" description="Helical" evidence="3">
    <location>
        <begin position="970"/>
        <end position="990"/>
    </location>
</feature>
<feature type="topological domain" description="Cytoplasmic" evidence="3">
    <location>
        <begin position="991"/>
        <end position="1001"/>
    </location>
</feature>
<feature type="transmembrane region" description="Helical" evidence="3">
    <location>
        <begin position="1002"/>
        <end position="1022"/>
    </location>
</feature>
<feature type="topological domain" description="Extracellular" evidence="3">
    <location>
        <begin position="1023"/>
        <end position="1031"/>
    </location>
</feature>
<feature type="transmembrane region" description="Helical" evidence="3">
    <location>
        <begin position="1032"/>
        <end position="1052"/>
    </location>
</feature>
<feature type="topological domain" description="Cytoplasmic" evidence="3">
    <location>
        <begin position="1053"/>
        <end position="1073"/>
    </location>
</feature>
<feature type="zinc finger region" description="RING-type; degenerate">
    <location>
        <begin position="13"/>
        <end position="59"/>
    </location>
</feature>
<feature type="region of interest" description="Disordered" evidence="4">
    <location>
        <begin position="66"/>
        <end position="98"/>
    </location>
</feature>
<feature type="region of interest" description="Disordered" evidence="4">
    <location>
        <begin position="655"/>
        <end position="676"/>
    </location>
</feature>
<feature type="coiled-coil region" evidence="3">
    <location>
        <begin position="443"/>
        <end position="470"/>
    </location>
</feature>
<feature type="compositionally biased region" description="Acidic residues" evidence="4">
    <location>
        <begin position="74"/>
        <end position="85"/>
    </location>
</feature>
<feature type="active site" evidence="3">
    <location>
        <position position="389"/>
    </location>
</feature>
<feature type="active site" evidence="3">
    <location>
        <position position="773"/>
    </location>
</feature>
<feature type="binding site" evidence="2">
    <location>
        <position position="13"/>
    </location>
    <ligand>
        <name>Zn(2+)</name>
        <dbReference type="ChEBI" id="CHEBI:29105"/>
        <label>1</label>
    </ligand>
</feature>
<feature type="binding site" evidence="2">
    <location>
        <position position="16"/>
    </location>
    <ligand>
        <name>Zn(2+)</name>
        <dbReference type="ChEBI" id="CHEBI:29105"/>
        <label>1</label>
    </ligand>
</feature>
<feature type="binding site" evidence="2">
    <location>
        <position position="32"/>
    </location>
    <ligand>
        <name>Zn(2+)</name>
        <dbReference type="ChEBI" id="CHEBI:29105"/>
        <label>2</label>
    </ligand>
</feature>
<feature type="binding site" evidence="2">
    <location>
        <position position="35"/>
    </location>
    <ligand>
        <name>Zn(2+)</name>
        <dbReference type="ChEBI" id="CHEBI:29105"/>
        <label>2</label>
    </ligand>
</feature>
<feature type="binding site" evidence="2">
    <location>
        <position position="40"/>
    </location>
    <ligand>
        <name>Zn(2+)</name>
        <dbReference type="ChEBI" id="CHEBI:29105"/>
        <label>1</label>
    </ligand>
</feature>
<feature type="binding site" evidence="2">
    <location>
        <position position="43"/>
    </location>
    <ligand>
        <name>Zn(2+)</name>
        <dbReference type="ChEBI" id="CHEBI:29105"/>
        <label>1</label>
    </ligand>
</feature>
<feature type="binding site" evidence="2">
    <location>
        <position position="55"/>
    </location>
    <ligand>
        <name>Zn(2+)</name>
        <dbReference type="ChEBI" id="CHEBI:29105"/>
        <label>2</label>
    </ligand>
</feature>
<feature type="binding site" evidence="2">
    <location>
        <position position="58"/>
    </location>
    <ligand>
        <name>Zn(2+)</name>
        <dbReference type="ChEBI" id="CHEBI:29105"/>
        <label>2</label>
    </ligand>
</feature>
<feature type="binding site" evidence="1">
    <location>
        <position position="353"/>
    </location>
    <ligand>
        <name>UDP-alpha-D-glucose</name>
        <dbReference type="ChEBI" id="CHEBI:58885"/>
    </ligand>
</feature>
<feature type="binding site" evidence="1">
    <location>
        <position position="359"/>
    </location>
    <ligand>
        <name>UDP-alpha-D-glucose</name>
        <dbReference type="ChEBI" id="CHEBI:58885"/>
    </ligand>
</feature>
<feature type="binding site" evidence="1">
    <location>
        <position position="360"/>
    </location>
    <ligand>
        <name>UDP-alpha-D-glucose</name>
        <dbReference type="ChEBI" id="CHEBI:58885"/>
    </ligand>
</feature>
<feature type="binding site" evidence="1">
    <location>
        <position position="389"/>
    </location>
    <ligand>
        <name>UDP-alpha-D-glucose</name>
        <dbReference type="ChEBI" id="CHEBI:58885"/>
    </ligand>
</feature>
<feature type="binding site" evidence="1">
    <location>
        <position position="530"/>
    </location>
    <ligand>
        <name>UDP-alpha-D-glucose</name>
        <dbReference type="ChEBI" id="CHEBI:58885"/>
    </ligand>
</feature>
<feature type="binding site" evidence="1">
    <location>
        <position position="531"/>
    </location>
    <ligand>
        <name>Mn(2+)</name>
        <dbReference type="ChEBI" id="CHEBI:29035"/>
    </ligand>
</feature>
<feature type="binding site" evidence="1">
    <location>
        <position position="555"/>
    </location>
    <ligand>
        <name>Mn(2+)</name>
        <dbReference type="ChEBI" id="CHEBI:29035"/>
    </ligand>
</feature>
<comment type="function">
    <text evidence="2">Probable catalytic subunit of cellulose synthase terminal complexes ('rosettes'), required for beta-1,4-glucan microfibril crystallization, a major mechanism of the cell wall formation.</text>
</comment>
<comment type="catalytic activity">
    <reaction evidence="5">
        <text>[(1-&gt;4)-beta-D-glucosyl](n) + UDP-alpha-D-glucose = [(1-&gt;4)-beta-D-glucosyl](n+1) + UDP + H(+)</text>
        <dbReference type="Rhea" id="RHEA:19929"/>
        <dbReference type="Rhea" id="RHEA-COMP:10033"/>
        <dbReference type="Rhea" id="RHEA-COMP:10034"/>
        <dbReference type="ChEBI" id="CHEBI:15378"/>
        <dbReference type="ChEBI" id="CHEBI:18246"/>
        <dbReference type="ChEBI" id="CHEBI:58223"/>
        <dbReference type="ChEBI" id="CHEBI:58885"/>
        <dbReference type="EC" id="2.4.1.12"/>
    </reaction>
</comment>
<comment type="cofactor">
    <cofactor evidence="1">
        <name>Mn(2+)</name>
        <dbReference type="ChEBI" id="CHEBI:29035"/>
    </cofactor>
</comment>
<comment type="cofactor">
    <cofactor evidence="2">
        <name>Zn(2+)</name>
        <dbReference type="ChEBI" id="CHEBI:29105"/>
    </cofactor>
    <text evidence="2">Binds 2 Zn(2+) ions per subunit.</text>
</comment>
<comment type="pathway">
    <text>Glycan metabolism; plant cellulose biosynthesis.</text>
</comment>
<comment type="subcellular location">
    <subcellularLocation>
        <location evidence="5">Cell membrane</location>
        <topology evidence="5">Multi-pass membrane protein</topology>
    </subcellularLocation>
</comment>
<comment type="similarity">
    <text evidence="5">Belongs to the glycosyltransferase 2 family. Plant cellulose synthase subfamily.</text>
</comment>
<reference key="1">
    <citation type="journal article" date="2005" name="PLoS Biol.">
        <title>The genomes of Oryza sativa: a history of duplications.</title>
        <authorList>
            <person name="Yu J."/>
            <person name="Wang J."/>
            <person name="Lin W."/>
            <person name="Li S."/>
            <person name="Li H."/>
            <person name="Zhou J."/>
            <person name="Ni P."/>
            <person name="Dong W."/>
            <person name="Hu S."/>
            <person name="Zeng C."/>
            <person name="Zhang J."/>
            <person name="Zhang Y."/>
            <person name="Li R."/>
            <person name="Xu Z."/>
            <person name="Li S."/>
            <person name="Li X."/>
            <person name="Zheng H."/>
            <person name="Cong L."/>
            <person name="Lin L."/>
            <person name="Yin J."/>
            <person name="Geng J."/>
            <person name="Li G."/>
            <person name="Shi J."/>
            <person name="Liu J."/>
            <person name="Lv H."/>
            <person name="Li J."/>
            <person name="Wang J."/>
            <person name="Deng Y."/>
            <person name="Ran L."/>
            <person name="Shi X."/>
            <person name="Wang X."/>
            <person name="Wu Q."/>
            <person name="Li C."/>
            <person name="Ren X."/>
            <person name="Wang J."/>
            <person name="Wang X."/>
            <person name="Li D."/>
            <person name="Liu D."/>
            <person name="Zhang X."/>
            <person name="Ji Z."/>
            <person name="Zhao W."/>
            <person name="Sun Y."/>
            <person name="Zhang Z."/>
            <person name="Bao J."/>
            <person name="Han Y."/>
            <person name="Dong L."/>
            <person name="Ji J."/>
            <person name="Chen P."/>
            <person name="Wu S."/>
            <person name="Liu J."/>
            <person name="Xiao Y."/>
            <person name="Bu D."/>
            <person name="Tan J."/>
            <person name="Yang L."/>
            <person name="Ye C."/>
            <person name="Zhang J."/>
            <person name="Xu J."/>
            <person name="Zhou Y."/>
            <person name="Yu Y."/>
            <person name="Zhang B."/>
            <person name="Zhuang S."/>
            <person name="Wei H."/>
            <person name="Liu B."/>
            <person name="Lei M."/>
            <person name="Yu H."/>
            <person name="Li Y."/>
            <person name="Xu H."/>
            <person name="Wei S."/>
            <person name="He X."/>
            <person name="Fang L."/>
            <person name="Zhang Z."/>
            <person name="Zhang Y."/>
            <person name="Huang X."/>
            <person name="Su Z."/>
            <person name="Tong W."/>
            <person name="Li J."/>
            <person name="Tong Z."/>
            <person name="Li S."/>
            <person name="Ye J."/>
            <person name="Wang L."/>
            <person name="Fang L."/>
            <person name="Lei T."/>
            <person name="Chen C.-S."/>
            <person name="Chen H.-C."/>
            <person name="Xu Z."/>
            <person name="Li H."/>
            <person name="Huang H."/>
            <person name="Zhang F."/>
            <person name="Xu H."/>
            <person name="Li N."/>
            <person name="Zhao C."/>
            <person name="Li S."/>
            <person name="Dong L."/>
            <person name="Huang Y."/>
            <person name="Li L."/>
            <person name="Xi Y."/>
            <person name="Qi Q."/>
            <person name="Li W."/>
            <person name="Zhang B."/>
            <person name="Hu W."/>
            <person name="Zhang Y."/>
            <person name="Tian X."/>
            <person name="Jiao Y."/>
            <person name="Liang X."/>
            <person name="Jin J."/>
            <person name="Gao L."/>
            <person name="Zheng W."/>
            <person name="Hao B."/>
            <person name="Liu S.-M."/>
            <person name="Wang W."/>
            <person name="Yuan L."/>
            <person name="Cao M."/>
            <person name="McDermott J."/>
            <person name="Samudrala R."/>
            <person name="Wang J."/>
            <person name="Wong G.K.-S."/>
            <person name="Yang H."/>
        </authorList>
    </citation>
    <scope>NUCLEOTIDE SEQUENCE [LARGE SCALE GENOMIC DNA]</scope>
    <source>
        <strain>cv. 93-11</strain>
    </source>
</reference>
<sequence length="1073" mass="120682">MDGAKSGKQCHVCQICGDGVGTAADGELFTACDVCGFPVCRPCYEYERKDGSQACPQCKTKYKRHKGSPPILGDESDDVDADDASDVNYPTSGNQDHKHKIAERMLTWRMNSGRNDDIVHSKYDSGEIGHPKYDSGEIPRIYIPSLTHSQISGEIPGASPDHMMSPVGNIGRRGHPFPYVNHSPNPSREFSGSLGNVAWKERVDGWKMKDKGAIPMANGTSIAPSEGRGVGDIDASTDYNMEDALLNDETRQPLSRKVPISSSRINPYRMVIVLRLIVLCIFLHYRITNPVRNAYPLWLLSVICEIWFALSWILDQFPKWSPINRETYLDRLALRYDREGEPSQLAPVDIFVSTVDPMKEPPLVTANTVLSILAVDYPVDKVSCYVSDDGAAMLTFDALAETSEFARKWVPFCKKYSIEPRAPEWYFAQKIDYLKDKVQASFVKDRRAMKREYEEFKVRVNALVAKAQKVPEEGWIMQDGTPWPGNNTRDHPGMIQVFLGHSGGLDTEGNELPRLVYVSREKRPGFQHHKKAGAMNALVRVSAVLTNGQYLLNLDCDHYINNSKALREAMCFLMDPNLGRRVCYVQFPQRFDGIDRNDRYANRNTVFFDINLRGLDGLQGPVYVGTGCVFNRTALYGYEPPIKQKRPGYFSSLCGGRKKTKKSKEKSTEKKKSHKHVDSSVPVFNLEDIEEGIEGSGFDDEKSLLMSQMSLEKRFGQSSVFVASTLMEYGGVPQSATPESLLKEAIHVISCGYEDKSDWGTEIGWIYGSVTEDILTGFKMHARGWRSIYCMPKRPAFKGSAPINLSDRLNQVLRWALGSVEILFSRHCPIWYGYGGRLKFLERFAYINTTIYPLTSIPLLLYCILPAICLLTGKFIIPEISNFASIWFISLFLSIFATGILEMRWSGVGIDEWWRNEQFWVIGGISAHLFAVFQGLLKVLAGIDTSFTVTSKASDEEGDFAELYMFKWTTLLIPPTTILIINLVGVVAGISYAINSGYQSWGPLFGKLFFAFWVIVHLYPFLKGLMGRQNRTPTIVVVWAILLASIFSLLWVRIDPFTTRVTGPDTQKCGINC</sequence>
<accession>A2XN66</accession>